<keyword id="KW-0067">ATP-binding</keyword>
<keyword id="KW-0238">DNA-binding</keyword>
<keyword id="KW-0479">Metal-binding</keyword>
<keyword id="KW-0547">Nucleotide-binding</keyword>
<keyword id="KW-0678">Repressor</keyword>
<keyword id="KW-0804">Transcription</keyword>
<keyword id="KW-0805">Transcription regulation</keyword>
<keyword id="KW-0862">Zinc</keyword>
<keyword id="KW-0863">Zinc-finger</keyword>
<reference key="1">
    <citation type="journal article" date="2006" name="Proc. Natl. Acad. Sci. U.S.A.">
        <title>Molecular genetic anatomy of inter- and intraserotype variation in the human bacterial pathogen group A Streptococcus.</title>
        <authorList>
            <person name="Beres S.B."/>
            <person name="Richter E.W."/>
            <person name="Nagiec M.J."/>
            <person name="Sumby P."/>
            <person name="Porcella S.F."/>
            <person name="DeLeo F.R."/>
            <person name="Musser J.M."/>
        </authorList>
    </citation>
    <scope>NUCLEOTIDE SEQUENCE [LARGE SCALE GENOMIC DNA]</scope>
    <source>
        <strain>MGAS10270</strain>
    </source>
</reference>
<protein>
    <recommendedName>
        <fullName evidence="1">Transcriptional repressor NrdR</fullName>
    </recommendedName>
</protein>
<proteinExistence type="inferred from homology"/>
<feature type="chain" id="PRO_0000264219" description="Transcriptional repressor NrdR">
    <location>
        <begin position="1"/>
        <end position="164"/>
    </location>
</feature>
<feature type="domain" description="ATP-cone" evidence="1">
    <location>
        <begin position="49"/>
        <end position="139"/>
    </location>
</feature>
<feature type="zinc finger region" evidence="1">
    <location>
        <begin position="3"/>
        <end position="34"/>
    </location>
</feature>
<gene>
    <name evidence="1" type="primary">nrdR</name>
    <name type="ordered locus">MGAS10270_Spy0281</name>
</gene>
<name>NRDR_STRPD</name>
<organism>
    <name type="scientific">Streptococcus pyogenes serotype M2 (strain MGAS10270)</name>
    <dbReference type="NCBI Taxonomy" id="370552"/>
    <lineage>
        <taxon>Bacteria</taxon>
        <taxon>Bacillati</taxon>
        <taxon>Bacillota</taxon>
        <taxon>Bacilli</taxon>
        <taxon>Lactobacillales</taxon>
        <taxon>Streptococcaceae</taxon>
        <taxon>Streptococcus</taxon>
    </lineage>
</organism>
<dbReference type="EMBL" id="CP000260">
    <property type="protein sequence ID" value="ABF33346.1"/>
    <property type="molecule type" value="Genomic_DNA"/>
</dbReference>
<dbReference type="RefSeq" id="WP_002985941.1">
    <property type="nucleotide sequence ID" value="NZ_CVUH01000002.1"/>
</dbReference>
<dbReference type="SMR" id="Q1JIH7"/>
<dbReference type="GeneID" id="69901381"/>
<dbReference type="KEGG" id="sph:MGAS10270_Spy0281"/>
<dbReference type="HOGENOM" id="CLU_108412_0_0_9"/>
<dbReference type="Proteomes" id="UP000002436">
    <property type="component" value="Chromosome"/>
</dbReference>
<dbReference type="GO" id="GO:0005524">
    <property type="term" value="F:ATP binding"/>
    <property type="evidence" value="ECO:0007669"/>
    <property type="project" value="UniProtKB-KW"/>
</dbReference>
<dbReference type="GO" id="GO:0003677">
    <property type="term" value="F:DNA binding"/>
    <property type="evidence" value="ECO:0007669"/>
    <property type="project" value="UniProtKB-KW"/>
</dbReference>
<dbReference type="GO" id="GO:0008270">
    <property type="term" value="F:zinc ion binding"/>
    <property type="evidence" value="ECO:0007669"/>
    <property type="project" value="UniProtKB-UniRule"/>
</dbReference>
<dbReference type="GO" id="GO:0045892">
    <property type="term" value="P:negative regulation of DNA-templated transcription"/>
    <property type="evidence" value="ECO:0007669"/>
    <property type="project" value="UniProtKB-UniRule"/>
</dbReference>
<dbReference type="HAMAP" id="MF_00440">
    <property type="entry name" value="NrdR"/>
    <property type="match status" value="1"/>
</dbReference>
<dbReference type="InterPro" id="IPR005144">
    <property type="entry name" value="ATP-cone_dom"/>
</dbReference>
<dbReference type="InterPro" id="IPR055173">
    <property type="entry name" value="NrdR-like_N"/>
</dbReference>
<dbReference type="InterPro" id="IPR003796">
    <property type="entry name" value="RNR_NrdR-like"/>
</dbReference>
<dbReference type="NCBIfam" id="TIGR00244">
    <property type="entry name" value="transcriptional regulator NrdR"/>
    <property type="match status" value="1"/>
</dbReference>
<dbReference type="PANTHER" id="PTHR30455">
    <property type="entry name" value="TRANSCRIPTIONAL REPRESSOR NRDR"/>
    <property type="match status" value="1"/>
</dbReference>
<dbReference type="PANTHER" id="PTHR30455:SF2">
    <property type="entry name" value="TRANSCRIPTIONAL REPRESSOR NRDR"/>
    <property type="match status" value="1"/>
</dbReference>
<dbReference type="Pfam" id="PF03477">
    <property type="entry name" value="ATP-cone"/>
    <property type="match status" value="1"/>
</dbReference>
<dbReference type="Pfam" id="PF22811">
    <property type="entry name" value="Zn_ribbon_NrdR"/>
    <property type="match status" value="1"/>
</dbReference>
<dbReference type="PROSITE" id="PS51161">
    <property type="entry name" value="ATP_CONE"/>
    <property type="match status" value="1"/>
</dbReference>
<sequence>MRCPKCNYHKSSVVDSRQAEDGNTIRRRRECEQCHTRFTTFERVEELPLLVIKKDGTREQFSRDKILNGVVQSAQKRPVSSTDIENVISRIEQEVRTTYENEVSSTAIGNLVMDELAELDEITYVRFASVYKSFKDVDEIEELLQQITNRVRGKKKRLNNDETN</sequence>
<comment type="function">
    <text evidence="1">Negatively regulates transcription of bacterial ribonucleotide reductase nrd genes and operons by binding to NrdR-boxes.</text>
</comment>
<comment type="cofactor">
    <cofactor evidence="1">
        <name>Zn(2+)</name>
        <dbReference type="ChEBI" id="CHEBI:29105"/>
    </cofactor>
    <text evidence="1">Binds 1 zinc ion.</text>
</comment>
<comment type="similarity">
    <text evidence="1">Belongs to the NrdR family.</text>
</comment>
<evidence type="ECO:0000255" key="1">
    <source>
        <dbReference type="HAMAP-Rule" id="MF_00440"/>
    </source>
</evidence>
<accession>Q1JIH7</accession>